<name>KDSA_CHLFF</name>
<comment type="catalytic activity">
    <reaction evidence="1">
        <text>D-arabinose 5-phosphate + phosphoenolpyruvate + H2O = 3-deoxy-alpha-D-manno-2-octulosonate-8-phosphate + phosphate</text>
        <dbReference type="Rhea" id="RHEA:14053"/>
        <dbReference type="ChEBI" id="CHEBI:15377"/>
        <dbReference type="ChEBI" id="CHEBI:43474"/>
        <dbReference type="ChEBI" id="CHEBI:57693"/>
        <dbReference type="ChEBI" id="CHEBI:58702"/>
        <dbReference type="ChEBI" id="CHEBI:85985"/>
        <dbReference type="EC" id="2.5.1.55"/>
    </reaction>
</comment>
<comment type="pathway">
    <text evidence="1">Carbohydrate biosynthesis; 3-deoxy-D-manno-octulosonate biosynthesis; 3-deoxy-D-manno-octulosonate from D-ribulose 5-phosphate: step 2/3.</text>
</comment>
<comment type="pathway">
    <text evidence="1">Bacterial outer membrane biogenesis; lipopolysaccharide biosynthesis.</text>
</comment>
<comment type="subcellular location">
    <subcellularLocation>
        <location evidence="1">Cytoplasm</location>
    </subcellularLocation>
</comment>
<comment type="similarity">
    <text evidence="1">Belongs to the KdsA family.</text>
</comment>
<sequence>MFSDKMILIAGPCVIEGEEITLEIASKIHELVSPYADRIHWIFKSSYDKANRSSINSYRGPGLSEGLRILSKVKETLGVEILTDVHSPEEARAAAEVCDILQIPAFLCRQTDLLVAAAETNAIINIKKGQFLSPWDMQGPVDKVLSTGNNKIILTERGCSFGYNNLVSDMRSIPVLSSMGFPVVFDGTHSVQLPGGLKTQSGGQTEFIPTLTRAALAAGAHGLFIETHSHPAIAKSDAASMLPLKTFEALLPLWDQLYTCVRSFEMASV</sequence>
<reference key="1">
    <citation type="journal article" date="2006" name="DNA Res.">
        <title>Genome sequence of the cat pathogen, Chlamydophila felis.</title>
        <authorList>
            <person name="Azuma Y."/>
            <person name="Hirakawa H."/>
            <person name="Yamashita A."/>
            <person name="Cai Y."/>
            <person name="Rahman M.A."/>
            <person name="Suzuki H."/>
            <person name="Mitaku S."/>
            <person name="Toh H."/>
            <person name="Goto S."/>
            <person name="Murakami T."/>
            <person name="Sugi K."/>
            <person name="Hayashi H."/>
            <person name="Fukushi H."/>
            <person name="Hattori M."/>
            <person name="Kuhara S."/>
            <person name="Shirai M."/>
        </authorList>
    </citation>
    <scope>NUCLEOTIDE SEQUENCE [LARGE SCALE GENOMIC DNA]</scope>
    <source>
        <strain>Fe/C-56</strain>
    </source>
</reference>
<keyword id="KW-0963">Cytoplasm</keyword>
<keyword id="KW-0448">Lipopolysaccharide biosynthesis</keyword>
<keyword id="KW-0808">Transferase</keyword>
<accession>Q252N1</accession>
<protein>
    <recommendedName>
        <fullName evidence="1">2-dehydro-3-deoxyphosphooctonate aldolase</fullName>
        <ecNumber evidence="1">2.5.1.55</ecNumber>
    </recommendedName>
    <alternativeName>
        <fullName evidence="1">3-deoxy-D-manno-octulosonic acid 8-phosphate synthase</fullName>
    </alternativeName>
    <alternativeName>
        <fullName evidence="1">KDO-8-phosphate synthase</fullName>
        <shortName evidence="1">KDO 8-P synthase</shortName>
        <shortName evidence="1">KDOPS</shortName>
    </alternativeName>
    <alternativeName>
        <fullName evidence="1">Phospho-2-dehydro-3-deoxyoctonate aldolase</fullName>
    </alternativeName>
</protein>
<feature type="chain" id="PRO_0000304444" description="2-dehydro-3-deoxyphosphooctonate aldolase">
    <location>
        <begin position="1"/>
        <end position="269"/>
    </location>
</feature>
<gene>
    <name evidence="1" type="primary">kdsA</name>
    <name type="ordered locus">CF0985</name>
</gene>
<organism>
    <name type="scientific">Chlamydia felis (strain Fe/C-56)</name>
    <name type="common">Chlamydophila felis</name>
    <dbReference type="NCBI Taxonomy" id="264202"/>
    <lineage>
        <taxon>Bacteria</taxon>
        <taxon>Pseudomonadati</taxon>
        <taxon>Chlamydiota</taxon>
        <taxon>Chlamydiia</taxon>
        <taxon>Chlamydiales</taxon>
        <taxon>Chlamydiaceae</taxon>
        <taxon>Chlamydia/Chlamydophila group</taxon>
        <taxon>Chlamydia</taxon>
    </lineage>
</organism>
<dbReference type="EC" id="2.5.1.55" evidence="1"/>
<dbReference type="EMBL" id="AP006861">
    <property type="protein sequence ID" value="BAE81757.1"/>
    <property type="molecule type" value="Genomic_DNA"/>
</dbReference>
<dbReference type="RefSeq" id="WP_011458530.1">
    <property type="nucleotide sequence ID" value="NC_007899.1"/>
</dbReference>
<dbReference type="SMR" id="Q252N1"/>
<dbReference type="STRING" id="264202.CF0985"/>
<dbReference type="KEGG" id="cfe:CF0985"/>
<dbReference type="eggNOG" id="COG2877">
    <property type="taxonomic scope" value="Bacteria"/>
</dbReference>
<dbReference type="HOGENOM" id="CLU_036666_0_0_0"/>
<dbReference type="OrthoDB" id="9780456at2"/>
<dbReference type="UniPathway" id="UPA00030"/>
<dbReference type="UniPathway" id="UPA00357">
    <property type="reaction ID" value="UER00474"/>
</dbReference>
<dbReference type="Proteomes" id="UP000001260">
    <property type="component" value="Chromosome"/>
</dbReference>
<dbReference type="GO" id="GO:0005737">
    <property type="term" value="C:cytoplasm"/>
    <property type="evidence" value="ECO:0007669"/>
    <property type="project" value="UniProtKB-SubCell"/>
</dbReference>
<dbReference type="GO" id="GO:0008676">
    <property type="term" value="F:3-deoxy-8-phosphooctulonate synthase activity"/>
    <property type="evidence" value="ECO:0007669"/>
    <property type="project" value="UniProtKB-UniRule"/>
</dbReference>
<dbReference type="GO" id="GO:0019294">
    <property type="term" value="P:keto-3-deoxy-D-manno-octulosonic acid biosynthetic process"/>
    <property type="evidence" value="ECO:0007669"/>
    <property type="project" value="UniProtKB-UniRule"/>
</dbReference>
<dbReference type="Gene3D" id="3.20.20.70">
    <property type="entry name" value="Aldolase class I"/>
    <property type="match status" value="1"/>
</dbReference>
<dbReference type="HAMAP" id="MF_00056">
    <property type="entry name" value="KDO8P_synth"/>
    <property type="match status" value="1"/>
</dbReference>
<dbReference type="InterPro" id="IPR013785">
    <property type="entry name" value="Aldolase_TIM"/>
</dbReference>
<dbReference type="InterPro" id="IPR006218">
    <property type="entry name" value="DAHP1/KDSA"/>
</dbReference>
<dbReference type="InterPro" id="IPR006269">
    <property type="entry name" value="KDO8P_synthase"/>
</dbReference>
<dbReference type="NCBIfam" id="TIGR01362">
    <property type="entry name" value="KDO8P_synth"/>
    <property type="match status" value="1"/>
</dbReference>
<dbReference type="NCBIfam" id="NF003543">
    <property type="entry name" value="PRK05198.1"/>
    <property type="match status" value="1"/>
</dbReference>
<dbReference type="PANTHER" id="PTHR21057">
    <property type="entry name" value="PHOSPHO-2-DEHYDRO-3-DEOXYHEPTONATE ALDOLASE"/>
    <property type="match status" value="1"/>
</dbReference>
<dbReference type="Pfam" id="PF00793">
    <property type="entry name" value="DAHP_synth_1"/>
    <property type="match status" value="1"/>
</dbReference>
<dbReference type="SUPFAM" id="SSF51569">
    <property type="entry name" value="Aldolase"/>
    <property type="match status" value="1"/>
</dbReference>
<proteinExistence type="inferred from homology"/>
<evidence type="ECO:0000255" key="1">
    <source>
        <dbReference type="HAMAP-Rule" id="MF_00056"/>
    </source>
</evidence>